<sequence length="371" mass="42629">MDSLLLLKKSIAEKKDVKLLASSEATSKVEKIEDAQYILFDENTSPILIDEPTKFIKLENDSHFSLRSVYFAWLLRDTSIAEYIQQCSELGIQNLTFLERTDLISWLEGSSDSEHIIGLEKPKPEGSTDAATSMDVDLHKKSEEVNWLFENTRTVSNHNSVLHGIKPIDFISLRKDVLDYIHANKATASAHADEQERPAKKRNRDPIILLSPSASSLLTMHNIKKFLEEGIFVPPAEAAHAAGGGRGPELIALSHKSSNSKFGTMRFIIVEGTEKFKPDYWDRVVCVFTTGQAWQFRDYKWSEPHQLFHHVKGFLVQYVGDPPHPATHDWNVEGIFVERLRRHTDREVVSQLWDKLERWMENRWPLWNGRR</sequence>
<proteinExistence type="inferred from homology"/>
<protein>
    <recommendedName>
        <fullName>Cell division control protein 73</fullName>
    </recommendedName>
</protein>
<dbReference type="EMBL" id="CU329671">
    <property type="protein sequence ID" value="CAB52800.1"/>
    <property type="molecule type" value="Genomic_DNA"/>
</dbReference>
<dbReference type="PIR" id="T39725">
    <property type="entry name" value="T39725"/>
</dbReference>
<dbReference type="RefSeq" id="NP_595891.1">
    <property type="nucleotide sequence ID" value="NM_001021798.2"/>
</dbReference>
<dbReference type="SMR" id="Q9UUE7"/>
<dbReference type="BioGRID" id="276174">
    <property type="interactions" value="10"/>
</dbReference>
<dbReference type="FunCoup" id="Q9UUE7">
    <property type="interactions" value="99"/>
</dbReference>
<dbReference type="STRING" id="284812.Q9UUE7"/>
<dbReference type="iPTMnet" id="Q9UUE7"/>
<dbReference type="PaxDb" id="4896-SPBC17G9.02c.1"/>
<dbReference type="EnsemblFungi" id="SPBC17G9.02c.1">
    <property type="protein sequence ID" value="SPBC17G9.02c.1:pep"/>
    <property type="gene ID" value="SPBC17G9.02c"/>
</dbReference>
<dbReference type="GeneID" id="2539616"/>
<dbReference type="KEGG" id="spo:2539616"/>
<dbReference type="PomBase" id="SPBC17G9.02c">
    <property type="gene designation" value="cdc73"/>
</dbReference>
<dbReference type="VEuPathDB" id="FungiDB:SPBC17G9.02c"/>
<dbReference type="eggNOG" id="KOG3786">
    <property type="taxonomic scope" value="Eukaryota"/>
</dbReference>
<dbReference type="HOGENOM" id="CLU_025849_2_0_1"/>
<dbReference type="InParanoid" id="Q9UUE7"/>
<dbReference type="OMA" id="FRPDYWN"/>
<dbReference type="PhylomeDB" id="Q9UUE7"/>
<dbReference type="PRO" id="PR:Q9UUE7"/>
<dbReference type="Proteomes" id="UP000002485">
    <property type="component" value="Chromosome II"/>
</dbReference>
<dbReference type="GO" id="GO:0016593">
    <property type="term" value="C:Cdc73/Paf1 complex"/>
    <property type="evidence" value="ECO:0000353"/>
    <property type="project" value="PomBase"/>
</dbReference>
<dbReference type="GO" id="GO:0005829">
    <property type="term" value="C:cytosol"/>
    <property type="evidence" value="ECO:0007005"/>
    <property type="project" value="PomBase"/>
</dbReference>
<dbReference type="GO" id="GO:0005634">
    <property type="term" value="C:nucleus"/>
    <property type="evidence" value="ECO:0007005"/>
    <property type="project" value="PomBase"/>
</dbReference>
<dbReference type="GO" id="GO:0000993">
    <property type="term" value="F:RNA polymerase II complex binding"/>
    <property type="evidence" value="ECO:0000318"/>
    <property type="project" value="GO_Central"/>
</dbReference>
<dbReference type="GO" id="GO:0032968">
    <property type="term" value="P:positive regulation of transcription elongation by RNA polymerase II"/>
    <property type="evidence" value="ECO:0000318"/>
    <property type="project" value="GO_Central"/>
</dbReference>
<dbReference type="GO" id="GO:0006368">
    <property type="term" value="P:transcription elongation by RNA polymerase II"/>
    <property type="evidence" value="ECO:0007669"/>
    <property type="project" value="InterPro"/>
</dbReference>
<dbReference type="Gene3D" id="3.40.50.11990">
    <property type="entry name" value="RNA polymerase II accessory factor, Cdc73 C-terminal domain"/>
    <property type="match status" value="1"/>
</dbReference>
<dbReference type="InterPro" id="IPR007852">
    <property type="entry name" value="Cdc73/Parafibromin"/>
</dbReference>
<dbReference type="InterPro" id="IPR031336">
    <property type="entry name" value="CDC73_C"/>
</dbReference>
<dbReference type="InterPro" id="IPR038103">
    <property type="entry name" value="CDC73_C_sf"/>
</dbReference>
<dbReference type="PANTHER" id="PTHR12466">
    <property type="entry name" value="CDC73 DOMAIN PROTEIN"/>
    <property type="match status" value="1"/>
</dbReference>
<dbReference type="PANTHER" id="PTHR12466:SF8">
    <property type="entry name" value="PARAFIBROMIN"/>
    <property type="match status" value="1"/>
</dbReference>
<dbReference type="Pfam" id="PF05179">
    <property type="entry name" value="CDC73_C"/>
    <property type="match status" value="1"/>
</dbReference>
<feature type="chain" id="PRO_0000339173" description="Cell division control protein 73">
    <location>
        <begin position="1"/>
        <end position="371"/>
    </location>
</feature>
<name>CDC73_SCHPO</name>
<gene>
    <name type="primary">cdc73</name>
    <name type="ORF">SPBC17G9.02c</name>
</gene>
<comment type="function">
    <text evidence="1">The PAF1 complex is a multifunctional complex. Involved in transcription initiation via genetic interactions with TATA-binding proteins. Involved in elongation. It regulates 3'-end formation of snR47 by modulating the recruitment or stable association of nrd1 with RNA polymerase II (By similarity).</text>
</comment>
<comment type="subunit">
    <text evidence="1">Component of the PAF1 complex which consists of at least cdc73, paf1 and rtf1.</text>
</comment>
<comment type="subcellular location">
    <subcellularLocation>
        <location evidence="2">Cytoplasm</location>
    </subcellularLocation>
    <subcellularLocation>
        <location evidence="2">Nucleus</location>
    </subcellularLocation>
</comment>
<comment type="similarity">
    <text evidence="3">Belongs to the CDC73 family.</text>
</comment>
<organism>
    <name type="scientific">Schizosaccharomyces pombe (strain 972 / ATCC 24843)</name>
    <name type="common">Fission yeast</name>
    <dbReference type="NCBI Taxonomy" id="284812"/>
    <lineage>
        <taxon>Eukaryota</taxon>
        <taxon>Fungi</taxon>
        <taxon>Dikarya</taxon>
        <taxon>Ascomycota</taxon>
        <taxon>Taphrinomycotina</taxon>
        <taxon>Schizosaccharomycetes</taxon>
        <taxon>Schizosaccharomycetales</taxon>
        <taxon>Schizosaccharomycetaceae</taxon>
        <taxon>Schizosaccharomyces</taxon>
    </lineage>
</organism>
<accession>Q9UUE7</accession>
<keyword id="KW-0010">Activator</keyword>
<keyword id="KW-0963">Cytoplasm</keyword>
<keyword id="KW-0539">Nucleus</keyword>
<keyword id="KW-1185">Reference proteome</keyword>
<keyword id="KW-0804">Transcription</keyword>
<keyword id="KW-0805">Transcription regulation</keyword>
<evidence type="ECO:0000250" key="1"/>
<evidence type="ECO:0000269" key="2">
    <source>
    </source>
</evidence>
<evidence type="ECO:0000305" key="3"/>
<reference key="1">
    <citation type="journal article" date="2002" name="Nature">
        <title>The genome sequence of Schizosaccharomyces pombe.</title>
        <authorList>
            <person name="Wood V."/>
            <person name="Gwilliam R."/>
            <person name="Rajandream M.A."/>
            <person name="Lyne M.H."/>
            <person name="Lyne R."/>
            <person name="Stewart A."/>
            <person name="Sgouros J.G."/>
            <person name="Peat N."/>
            <person name="Hayles J."/>
            <person name="Baker S.G."/>
            <person name="Basham D."/>
            <person name="Bowman S."/>
            <person name="Brooks K."/>
            <person name="Brown D."/>
            <person name="Brown S."/>
            <person name="Chillingworth T."/>
            <person name="Churcher C.M."/>
            <person name="Collins M."/>
            <person name="Connor R."/>
            <person name="Cronin A."/>
            <person name="Davis P."/>
            <person name="Feltwell T."/>
            <person name="Fraser A."/>
            <person name="Gentles S."/>
            <person name="Goble A."/>
            <person name="Hamlin N."/>
            <person name="Harris D.E."/>
            <person name="Hidalgo J."/>
            <person name="Hodgson G."/>
            <person name="Holroyd S."/>
            <person name="Hornsby T."/>
            <person name="Howarth S."/>
            <person name="Huckle E.J."/>
            <person name="Hunt S."/>
            <person name="Jagels K."/>
            <person name="James K.D."/>
            <person name="Jones L."/>
            <person name="Jones M."/>
            <person name="Leather S."/>
            <person name="McDonald S."/>
            <person name="McLean J."/>
            <person name="Mooney P."/>
            <person name="Moule S."/>
            <person name="Mungall K.L."/>
            <person name="Murphy L.D."/>
            <person name="Niblett D."/>
            <person name="Odell C."/>
            <person name="Oliver K."/>
            <person name="O'Neil S."/>
            <person name="Pearson D."/>
            <person name="Quail M.A."/>
            <person name="Rabbinowitsch E."/>
            <person name="Rutherford K.M."/>
            <person name="Rutter S."/>
            <person name="Saunders D."/>
            <person name="Seeger K."/>
            <person name="Sharp S."/>
            <person name="Skelton J."/>
            <person name="Simmonds M.N."/>
            <person name="Squares R."/>
            <person name="Squares S."/>
            <person name="Stevens K."/>
            <person name="Taylor K."/>
            <person name="Taylor R.G."/>
            <person name="Tivey A."/>
            <person name="Walsh S.V."/>
            <person name="Warren T."/>
            <person name="Whitehead S."/>
            <person name="Woodward J.R."/>
            <person name="Volckaert G."/>
            <person name="Aert R."/>
            <person name="Robben J."/>
            <person name="Grymonprez B."/>
            <person name="Weltjens I."/>
            <person name="Vanstreels E."/>
            <person name="Rieger M."/>
            <person name="Schaefer M."/>
            <person name="Mueller-Auer S."/>
            <person name="Gabel C."/>
            <person name="Fuchs M."/>
            <person name="Duesterhoeft A."/>
            <person name="Fritzc C."/>
            <person name="Holzer E."/>
            <person name="Moestl D."/>
            <person name="Hilbert H."/>
            <person name="Borzym K."/>
            <person name="Langer I."/>
            <person name="Beck A."/>
            <person name="Lehrach H."/>
            <person name="Reinhardt R."/>
            <person name="Pohl T.M."/>
            <person name="Eger P."/>
            <person name="Zimmermann W."/>
            <person name="Wedler H."/>
            <person name="Wambutt R."/>
            <person name="Purnelle B."/>
            <person name="Goffeau A."/>
            <person name="Cadieu E."/>
            <person name="Dreano S."/>
            <person name="Gloux S."/>
            <person name="Lelaure V."/>
            <person name="Mottier S."/>
            <person name="Galibert F."/>
            <person name="Aves S.J."/>
            <person name="Xiang Z."/>
            <person name="Hunt C."/>
            <person name="Moore K."/>
            <person name="Hurst S.M."/>
            <person name="Lucas M."/>
            <person name="Rochet M."/>
            <person name="Gaillardin C."/>
            <person name="Tallada V.A."/>
            <person name="Garzon A."/>
            <person name="Thode G."/>
            <person name="Daga R.R."/>
            <person name="Cruzado L."/>
            <person name="Jimenez J."/>
            <person name="Sanchez M."/>
            <person name="del Rey F."/>
            <person name="Benito J."/>
            <person name="Dominguez A."/>
            <person name="Revuelta J.L."/>
            <person name="Moreno S."/>
            <person name="Armstrong J."/>
            <person name="Forsburg S.L."/>
            <person name="Cerutti L."/>
            <person name="Lowe T."/>
            <person name="McCombie W.R."/>
            <person name="Paulsen I."/>
            <person name="Potashkin J."/>
            <person name="Shpakovski G.V."/>
            <person name="Ussery D."/>
            <person name="Barrell B.G."/>
            <person name="Nurse P."/>
        </authorList>
    </citation>
    <scope>NUCLEOTIDE SEQUENCE [LARGE SCALE GENOMIC DNA]</scope>
    <source>
        <strain>972 / ATCC 24843</strain>
    </source>
</reference>
<reference key="2">
    <citation type="journal article" date="2006" name="Nat. Biotechnol.">
        <title>ORFeome cloning and global analysis of protein localization in the fission yeast Schizosaccharomyces pombe.</title>
        <authorList>
            <person name="Matsuyama A."/>
            <person name="Arai R."/>
            <person name="Yashiroda Y."/>
            <person name="Shirai A."/>
            <person name="Kamata A."/>
            <person name="Sekido S."/>
            <person name="Kobayashi Y."/>
            <person name="Hashimoto A."/>
            <person name="Hamamoto M."/>
            <person name="Hiraoka Y."/>
            <person name="Horinouchi S."/>
            <person name="Yoshida M."/>
        </authorList>
    </citation>
    <scope>SUBCELLULAR LOCATION [LARGE SCALE ANALYSIS]</scope>
</reference>